<comment type="function">
    <text evidence="1">Part of the energy-coupling factor (ECF) transporter complex CbiMNOQ involved in cobalt import.</text>
</comment>
<comment type="pathway">
    <text evidence="1">Cofactor biosynthesis; adenosylcobalamin biosynthesis.</text>
</comment>
<comment type="subunit">
    <text evidence="1">Forms an energy-coupling factor (ECF) transporter complex composed of an ATP-binding protein (A component, CbiO), a transmembrane protein (T component, CbiQ) and 2 possible substrate-capture proteins (S components, CbiM and CbiN) of unknown stoichimetry.</text>
</comment>
<comment type="subcellular location">
    <subcellularLocation>
        <location evidence="1">Cell membrane</location>
        <topology evidence="1">Multi-pass membrane protein</topology>
    </subcellularLocation>
</comment>
<comment type="similarity">
    <text evidence="1">Belongs to the CbiM family.</text>
</comment>
<gene>
    <name evidence="1" type="primary">cbiM</name>
    <name type="ordered locus">CTC_00723</name>
</gene>
<feature type="signal peptide" evidence="1">
    <location>
        <begin position="1"/>
        <end position="23"/>
    </location>
</feature>
<feature type="chain" id="PRO_0000411140" description="Cobalt transport protein CbiM">
    <location>
        <begin position="24"/>
        <end position="241"/>
    </location>
</feature>
<feature type="transmembrane region" description="Helical" evidence="1">
    <location>
        <begin position="29"/>
        <end position="49"/>
    </location>
</feature>
<feature type="transmembrane region" description="Helical" evidence="1">
    <location>
        <begin position="66"/>
        <end position="86"/>
    </location>
</feature>
<feature type="transmembrane region" description="Helical" evidence="1">
    <location>
        <begin position="98"/>
        <end position="118"/>
    </location>
</feature>
<feature type="transmembrane region" description="Helical" evidence="1">
    <location>
        <begin position="121"/>
        <end position="141"/>
    </location>
</feature>
<feature type="transmembrane region" description="Helical" evidence="1">
    <location>
        <begin position="160"/>
        <end position="180"/>
    </location>
</feature>
<feature type="transmembrane region" description="Helical" evidence="1">
    <location>
        <begin position="202"/>
        <end position="222"/>
    </location>
</feature>
<name>CBIM_CLOTE</name>
<dbReference type="EMBL" id="AE015927">
    <property type="protein sequence ID" value="AAO35325.1"/>
    <property type="molecule type" value="Genomic_DNA"/>
</dbReference>
<dbReference type="RefSeq" id="WP_035110300.1">
    <property type="nucleotide sequence ID" value="NC_004557.1"/>
</dbReference>
<dbReference type="SMR" id="Q897L1"/>
<dbReference type="STRING" id="212717.CTC_00723"/>
<dbReference type="GeneID" id="24254581"/>
<dbReference type="KEGG" id="ctc:CTC_00723"/>
<dbReference type="HOGENOM" id="CLU_052508_3_0_9"/>
<dbReference type="OrthoDB" id="9809846at2"/>
<dbReference type="UniPathway" id="UPA00148"/>
<dbReference type="Proteomes" id="UP000001412">
    <property type="component" value="Chromosome"/>
</dbReference>
<dbReference type="GO" id="GO:0043190">
    <property type="term" value="C:ATP-binding cassette (ABC) transporter complex"/>
    <property type="evidence" value="ECO:0007669"/>
    <property type="project" value="InterPro"/>
</dbReference>
<dbReference type="GO" id="GO:0015087">
    <property type="term" value="F:cobalt ion transmembrane transporter activity"/>
    <property type="evidence" value="ECO:0007669"/>
    <property type="project" value="UniProtKB-UniRule"/>
</dbReference>
<dbReference type="GO" id="GO:0009236">
    <property type="term" value="P:cobalamin biosynthetic process"/>
    <property type="evidence" value="ECO:0007669"/>
    <property type="project" value="UniProtKB-UniRule"/>
</dbReference>
<dbReference type="FunFam" id="1.10.1760.20:FF:000001">
    <property type="entry name" value="Cobalt transport protein CbiM"/>
    <property type="match status" value="1"/>
</dbReference>
<dbReference type="Gene3D" id="1.10.1760.20">
    <property type="match status" value="1"/>
</dbReference>
<dbReference type="HAMAP" id="MF_01462">
    <property type="entry name" value="CbiM"/>
    <property type="match status" value="1"/>
</dbReference>
<dbReference type="InterPro" id="IPR018024">
    <property type="entry name" value="CbiM"/>
</dbReference>
<dbReference type="InterPro" id="IPR002751">
    <property type="entry name" value="CbiM/NikMN"/>
</dbReference>
<dbReference type="NCBIfam" id="TIGR00123">
    <property type="entry name" value="cbiM"/>
    <property type="match status" value="1"/>
</dbReference>
<dbReference type="NCBIfam" id="NF006184">
    <property type="entry name" value="PRK08319.1"/>
    <property type="match status" value="1"/>
</dbReference>
<dbReference type="PANTHER" id="PTHR43627">
    <property type="match status" value="1"/>
</dbReference>
<dbReference type="PANTHER" id="PTHR43627:SF1">
    <property type="entry name" value="COBALT TRANSPORT PROTEIN CBIM"/>
    <property type="match status" value="1"/>
</dbReference>
<dbReference type="Pfam" id="PF01891">
    <property type="entry name" value="CbiM"/>
    <property type="match status" value="1"/>
</dbReference>
<protein>
    <recommendedName>
        <fullName evidence="1">Cobalt transport protein CbiM</fullName>
    </recommendedName>
    <alternativeName>
        <fullName evidence="1">Energy-coupling factor transporter probable substrate-capture protein CbiM</fullName>
        <shortName evidence="1">ECF transporter S component CbiM</shortName>
    </alternativeName>
</protein>
<evidence type="ECO:0000255" key="1">
    <source>
        <dbReference type="HAMAP-Rule" id="MF_01462"/>
    </source>
</evidence>
<keyword id="KW-1003">Cell membrane</keyword>
<keyword id="KW-0169">Cobalamin biosynthesis</keyword>
<keyword id="KW-0170">Cobalt</keyword>
<keyword id="KW-0171">Cobalt transport</keyword>
<keyword id="KW-0406">Ion transport</keyword>
<keyword id="KW-0472">Membrane</keyword>
<keyword id="KW-1185">Reference proteome</keyword>
<keyword id="KW-0732">Signal</keyword>
<keyword id="KW-0812">Transmembrane</keyword>
<keyword id="KW-1133">Transmembrane helix</keyword>
<keyword id="KW-0813">Transport</keyword>
<sequence>MKKNLTFFMVIALLFTITPNVYAMHIAEGFLPPMWSGVYFVISAPFIIIGLKQIRERAKDNKDIKMLLGLVAAYAFILSAMKIPSVTGSCSHPTGTGLSAIIFGPFISAIVGLIVLIFQAILLAHGGITTLGANTLSMGIMGPIVSYLIYRGFKNKNQKVAVFLAATLGDLFTYFITSVQLALAFPAQQGGIAASFAKFFSIFSITQIPLAIMEGILTVIIFEFVMKYASKEIEVLGGVRK</sequence>
<reference key="1">
    <citation type="journal article" date="2003" name="Proc. Natl. Acad. Sci. U.S.A.">
        <title>The genome sequence of Clostridium tetani, the causative agent of tetanus disease.</title>
        <authorList>
            <person name="Brueggemann H."/>
            <person name="Baeumer S."/>
            <person name="Fricke W.F."/>
            <person name="Wiezer A."/>
            <person name="Liesegang H."/>
            <person name="Decker I."/>
            <person name="Herzberg C."/>
            <person name="Martinez-Arias R."/>
            <person name="Merkl R."/>
            <person name="Henne A."/>
            <person name="Gottschalk G."/>
        </authorList>
    </citation>
    <scope>NUCLEOTIDE SEQUENCE [LARGE SCALE GENOMIC DNA]</scope>
    <source>
        <strain>Massachusetts / E88</strain>
    </source>
</reference>
<accession>Q897L1</accession>
<organism>
    <name type="scientific">Clostridium tetani (strain Massachusetts / E88)</name>
    <dbReference type="NCBI Taxonomy" id="212717"/>
    <lineage>
        <taxon>Bacteria</taxon>
        <taxon>Bacillati</taxon>
        <taxon>Bacillota</taxon>
        <taxon>Clostridia</taxon>
        <taxon>Eubacteriales</taxon>
        <taxon>Clostridiaceae</taxon>
        <taxon>Clostridium</taxon>
    </lineage>
</organism>
<proteinExistence type="inferred from homology"/>